<proteinExistence type="inferred from homology"/>
<protein>
    <recommendedName>
        <fullName evidence="1">DNA ligase</fullName>
        <ecNumber evidence="1">6.5.1.2</ecNumber>
    </recommendedName>
    <alternativeName>
        <fullName evidence="1">Polydeoxyribonucleotide synthase [NAD(+)]</fullName>
    </alternativeName>
</protein>
<keyword id="KW-0227">DNA damage</keyword>
<keyword id="KW-0234">DNA repair</keyword>
<keyword id="KW-0235">DNA replication</keyword>
<keyword id="KW-0436">Ligase</keyword>
<keyword id="KW-0460">Magnesium</keyword>
<keyword id="KW-0464">Manganese</keyword>
<keyword id="KW-0479">Metal-binding</keyword>
<keyword id="KW-0520">NAD</keyword>
<keyword id="KW-1185">Reference proteome</keyword>
<keyword id="KW-0862">Zinc</keyword>
<accession>B9KHN8</accession>
<dbReference type="EC" id="6.5.1.2" evidence="1"/>
<dbReference type="EMBL" id="CP001079">
    <property type="protein sequence ID" value="ACM49000.1"/>
    <property type="molecule type" value="Genomic_DNA"/>
</dbReference>
<dbReference type="RefSeq" id="WP_010269427.1">
    <property type="nucleotide sequence ID" value="NC_012026.1"/>
</dbReference>
<dbReference type="SMR" id="B9KHN8"/>
<dbReference type="STRING" id="320483.AMF_112"/>
<dbReference type="GeneID" id="7398574"/>
<dbReference type="KEGG" id="amf:AMF_112"/>
<dbReference type="PATRIC" id="fig|320483.3.peg.131"/>
<dbReference type="eggNOG" id="COG0272">
    <property type="taxonomic scope" value="Bacteria"/>
</dbReference>
<dbReference type="HOGENOM" id="CLU_007764_2_1_5"/>
<dbReference type="Proteomes" id="UP000007307">
    <property type="component" value="Chromosome"/>
</dbReference>
<dbReference type="GO" id="GO:0005829">
    <property type="term" value="C:cytosol"/>
    <property type="evidence" value="ECO:0007669"/>
    <property type="project" value="TreeGrafter"/>
</dbReference>
<dbReference type="GO" id="GO:0003911">
    <property type="term" value="F:DNA ligase (NAD+) activity"/>
    <property type="evidence" value="ECO:0007669"/>
    <property type="project" value="UniProtKB-UniRule"/>
</dbReference>
<dbReference type="GO" id="GO:0046872">
    <property type="term" value="F:metal ion binding"/>
    <property type="evidence" value="ECO:0007669"/>
    <property type="project" value="UniProtKB-KW"/>
</dbReference>
<dbReference type="GO" id="GO:0006281">
    <property type="term" value="P:DNA repair"/>
    <property type="evidence" value="ECO:0007669"/>
    <property type="project" value="UniProtKB-KW"/>
</dbReference>
<dbReference type="GO" id="GO:0006260">
    <property type="term" value="P:DNA replication"/>
    <property type="evidence" value="ECO:0007669"/>
    <property type="project" value="UniProtKB-KW"/>
</dbReference>
<dbReference type="CDD" id="cd17748">
    <property type="entry name" value="BRCT_DNA_ligase_like"/>
    <property type="match status" value="1"/>
</dbReference>
<dbReference type="CDD" id="cd00114">
    <property type="entry name" value="LIGANc"/>
    <property type="match status" value="1"/>
</dbReference>
<dbReference type="FunFam" id="2.40.50.140:FF:000012">
    <property type="entry name" value="DNA ligase"/>
    <property type="match status" value="1"/>
</dbReference>
<dbReference type="Gene3D" id="6.20.10.30">
    <property type="match status" value="1"/>
</dbReference>
<dbReference type="Gene3D" id="1.10.150.20">
    <property type="entry name" value="5' to 3' exonuclease, C-terminal subdomain"/>
    <property type="match status" value="2"/>
</dbReference>
<dbReference type="Gene3D" id="3.40.50.10190">
    <property type="entry name" value="BRCT domain"/>
    <property type="match status" value="1"/>
</dbReference>
<dbReference type="Gene3D" id="3.30.470.30">
    <property type="entry name" value="DNA ligase/mRNA capping enzyme"/>
    <property type="match status" value="1"/>
</dbReference>
<dbReference type="Gene3D" id="1.10.287.610">
    <property type="entry name" value="Helix hairpin bin"/>
    <property type="match status" value="1"/>
</dbReference>
<dbReference type="Gene3D" id="2.40.50.140">
    <property type="entry name" value="Nucleic acid-binding proteins"/>
    <property type="match status" value="1"/>
</dbReference>
<dbReference type="HAMAP" id="MF_01588">
    <property type="entry name" value="DNA_ligase_A"/>
    <property type="match status" value="1"/>
</dbReference>
<dbReference type="InterPro" id="IPR001357">
    <property type="entry name" value="BRCT_dom"/>
</dbReference>
<dbReference type="InterPro" id="IPR036420">
    <property type="entry name" value="BRCT_dom_sf"/>
</dbReference>
<dbReference type="InterPro" id="IPR041663">
    <property type="entry name" value="DisA/LigA_HHH"/>
</dbReference>
<dbReference type="InterPro" id="IPR001679">
    <property type="entry name" value="DNA_ligase"/>
</dbReference>
<dbReference type="InterPro" id="IPR018239">
    <property type="entry name" value="DNA_ligase_AS"/>
</dbReference>
<dbReference type="InterPro" id="IPR013839">
    <property type="entry name" value="DNAligase_adenylation"/>
</dbReference>
<dbReference type="InterPro" id="IPR013840">
    <property type="entry name" value="DNAligase_N"/>
</dbReference>
<dbReference type="InterPro" id="IPR012340">
    <property type="entry name" value="NA-bd_OB-fold"/>
</dbReference>
<dbReference type="InterPro" id="IPR004150">
    <property type="entry name" value="NAD_DNA_ligase_OB"/>
</dbReference>
<dbReference type="InterPro" id="IPR010994">
    <property type="entry name" value="RuvA_2-like"/>
</dbReference>
<dbReference type="InterPro" id="IPR004149">
    <property type="entry name" value="Znf_DNAligase_C4"/>
</dbReference>
<dbReference type="NCBIfam" id="TIGR00575">
    <property type="entry name" value="dnlj"/>
    <property type="match status" value="1"/>
</dbReference>
<dbReference type="NCBIfam" id="NF005932">
    <property type="entry name" value="PRK07956.1"/>
    <property type="match status" value="1"/>
</dbReference>
<dbReference type="PANTHER" id="PTHR23389">
    <property type="entry name" value="CHROMOSOME TRANSMISSION FIDELITY FACTOR 18"/>
    <property type="match status" value="1"/>
</dbReference>
<dbReference type="PANTHER" id="PTHR23389:SF9">
    <property type="entry name" value="DNA LIGASE"/>
    <property type="match status" value="1"/>
</dbReference>
<dbReference type="Pfam" id="PF00533">
    <property type="entry name" value="BRCT"/>
    <property type="match status" value="1"/>
</dbReference>
<dbReference type="Pfam" id="PF01653">
    <property type="entry name" value="DNA_ligase_aden"/>
    <property type="match status" value="1"/>
</dbReference>
<dbReference type="Pfam" id="PF03120">
    <property type="entry name" value="DNA_ligase_OB"/>
    <property type="match status" value="1"/>
</dbReference>
<dbReference type="Pfam" id="PF03119">
    <property type="entry name" value="DNA_ligase_ZBD"/>
    <property type="match status" value="1"/>
</dbReference>
<dbReference type="Pfam" id="PF12826">
    <property type="entry name" value="HHH_2"/>
    <property type="match status" value="1"/>
</dbReference>
<dbReference type="PIRSF" id="PIRSF001604">
    <property type="entry name" value="LigA"/>
    <property type="match status" value="1"/>
</dbReference>
<dbReference type="SMART" id="SM00292">
    <property type="entry name" value="BRCT"/>
    <property type="match status" value="1"/>
</dbReference>
<dbReference type="SMART" id="SM00532">
    <property type="entry name" value="LIGANc"/>
    <property type="match status" value="1"/>
</dbReference>
<dbReference type="SUPFAM" id="SSF52113">
    <property type="entry name" value="BRCT domain"/>
    <property type="match status" value="1"/>
</dbReference>
<dbReference type="SUPFAM" id="SSF56091">
    <property type="entry name" value="DNA ligase/mRNA capping enzyme, catalytic domain"/>
    <property type="match status" value="1"/>
</dbReference>
<dbReference type="SUPFAM" id="SSF50249">
    <property type="entry name" value="Nucleic acid-binding proteins"/>
    <property type="match status" value="1"/>
</dbReference>
<dbReference type="SUPFAM" id="SSF47781">
    <property type="entry name" value="RuvA domain 2-like"/>
    <property type="match status" value="1"/>
</dbReference>
<dbReference type="PROSITE" id="PS50172">
    <property type="entry name" value="BRCT"/>
    <property type="match status" value="1"/>
</dbReference>
<dbReference type="PROSITE" id="PS01055">
    <property type="entry name" value="DNA_LIGASE_N1"/>
    <property type="match status" value="1"/>
</dbReference>
<name>DNLJ_ANAMF</name>
<comment type="function">
    <text evidence="1">DNA ligase that catalyzes the formation of phosphodiester linkages between 5'-phosphoryl and 3'-hydroxyl groups in double-stranded DNA using NAD as a coenzyme and as the energy source for the reaction. It is essential for DNA replication and repair of damaged DNA.</text>
</comment>
<comment type="catalytic activity">
    <reaction evidence="1">
        <text>NAD(+) + (deoxyribonucleotide)n-3'-hydroxyl + 5'-phospho-(deoxyribonucleotide)m = (deoxyribonucleotide)n+m + AMP + beta-nicotinamide D-nucleotide.</text>
        <dbReference type="EC" id="6.5.1.2"/>
    </reaction>
</comment>
<comment type="cofactor">
    <cofactor evidence="1">
        <name>Mg(2+)</name>
        <dbReference type="ChEBI" id="CHEBI:18420"/>
    </cofactor>
    <cofactor evidence="1">
        <name>Mn(2+)</name>
        <dbReference type="ChEBI" id="CHEBI:29035"/>
    </cofactor>
</comment>
<comment type="similarity">
    <text evidence="1">Belongs to the NAD-dependent DNA ligase family. LigA subfamily.</text>
</comment>
<evidence type="ECO:0000255" key="1">
    <source>
        <dbReference type="HAMAP-Rule" id="MF_01588"/>
    </source>
</evidence>
<gene>
    <name evidence="1" type="primary">ligA</name>
    <name type="ordered locus">AMF_112</name>
</gene>
<organism>
    <name type="scientific">Anaplasma marginale (strain Florida)</name>
    <dbReference type="NCBI Taxonomy" id="320483"/>
    <lineage>
        <taxon>Bacteria</taxon>
        <taxon>Pseudomonadati</taxon>
        <taxon>Pseudomonadota</taxon>
        <taxon>Alphaproteobacteria</taxon>
        <taxon>Rickettsiales</taxon>
        <taxon>Anaplasmataceae</taxon>
        <taxon>Anaplasma</taxon>
    </lineage>
</organism>
<reference key="1">
    <citation type="journal article" date="2009" name="BMC Genomics">
        <title>Conservation in the face of diversity: multistrain analysis of an intracellular bacterium.</title>
        <authorList>
            <person name="Dark M.J."/>
            <person name="Herndon D.R."/>
            <person name="Kappmeyer L.S."/>
            <person name="Gonzales M.P."/>
            <person name="Nordeen E."/>
            <person name="Palmer G.H."/>
            <person name="Knowles D.P. Jr."/>
            <person name="Brayton K.A."/>
        </authorList>
    </citation>
    <scope>NUCLEOTIDE SEQUENCE [LARGE SCALE GENOMIC DNA]</scope>
    <source>
        <strain>Florida</strain>
    </source>
</reference>
<sequence length="673" mass="74755">MLEQARRRLAGLNAKLRHHDMLYHGLDAPEVTDHQYDLLVQEKKRLLDEFPDIRQYDDYADVVGTPKIDSRFPKVQHLEPMLSLENAFTVQDVEKFITRVRRFLELQPDDILELSCELKMDGMSFSALYHGGKLTRVATRGNGHFGEDITTNAMVLRGLPHQLDSAPEVLEVRGEIYMHHEDFEKLRGSCNFANPRNAAAGSIRQLNQKIVEERNLSYVAYSAVNSTFATQQEILKQLDEWGFHTNKQVLFTDKIEEAIAFYNSVYTTRSALGYDIDGVVYKVNSINFQKLLGATGKSPRWAIAHKFPSTEARTKLLDITVQVGRTGVVTPIAELEPINIGGVMVSRASLHNLNEIERKDVRIGDLVIVKRAGEVIPQVVDVDKTLRSSGTQKFVFPSHCPSCGSKLHREPGEVALRCVAELSCKAQALERVKHFVSRDGLNIMGLGAKQIEFFCNHGLIGSIADIFSLEEKLHGINLDTEHGWGEKSVANLIAAIRNSATVRLSNFIFALGIRFIGVGAAKLIAEHYRSYKNWHQAMLALTETHDTVQIRGLGEKSISSLKAFFSVQGNLEVLESLSAKLNILDEASPAQRGSSAISGKTVVFTGTLESMSRTEAKLQAESLGAKVANSVSANTWLLVAGSNPGSKHEKALSLNVRVIDEQTWVKMVEDARS</sequence>
<feature type="chain" id="PRO_0000380289" description="DNA ligase">
    <location>
        <begin position="1"/>
        <end position="673"/>
    </location>
</feature>
<feature type="domain" description="BRCT" evidence="1">
    <location>
        <begin position="592"/>
        <end position="673"/>
    </location>
</feature>
<feature type="active site" description="N6-AMP-lysine intermediate" evidence="1">
    <location>
        <position position="119"/>
    </location>
</feature>
<feature type="binding site" evidence="1">
    <location>
        <begin position="33"/>
        <end position="37"/>
    </location>
    <ligand>
        <name>NAD(+)</name>
        <dbReference type="ChEBI" id="CHEBI:57540"/>
    </ligand>
</feature>
<feature type="binding site" evidence="1">
    <location>
        <begin position="83"/>
        <end position="84"/>
    </location>
    <ligand>
        <name>NAD(+)</name>
        <dbReference type="ChEBI" id="CHEBI:57540"/>
    </ligand>
</feature>
<feature type="binding site" evidence="1">
    <location>
        <position position="117"/>
    </location>
    <ligand>
        <name>NAD(+)</name>
        <dbReference type="ChEBI" id="CHEBI:57540"/>
    </ligand>
</feature>
<feature type="binding site" evidence="1">
    <location>
        <position position="140"/>
    </location>
    <ligand>
        <name>NAD(+)</name>
        <dbReference type="ChEBI" id="CHEBI:57540"/>
    </ligand>
</feature>
<feature type="binding site" evidence="1">
    <location>
        <position position="175"/>
    </location>
    <ligand>
        <name>NAD(+)</name>
        <dbReference type="ChEBI" id="CHEBI:57540"/>
    </ligand>
</feature>
<feature type="binding site" evidence="1">
    <location>
        <position position="282"/>
    </location>
    <ligand>
        <name>NAD(+)</name>
        <dbReference type="ChEBI" id="CHEBI:57540"/>
    </ligand>
</feature>
<feature type="binding site" evidence="1">
    <location>
        <position position="306"/>
    </location>
    <ligand>
        <name>NAD(+)</name>
        <dbReference type="ChEBI" id="CHEBI:57540"/>
    </ligand>
</feature>
<feature type="binding site" evidence="1">
    <location>
        <position position="400"/>
    </location>
    <ligand>
        <name>Zn(2+)</name>
        <dbReference type="ChEBI" id="CHEBI:29105"/>
    </ligand>
</feature>
<feature type="binding site" evidence="1">
    <location>
        <position position="403"/>
    </location>
    <ligand>
        <name>Zn(2+)</name>
        <dbReference type="ChEBI" id="CHEBI:29105"/>
    </ligand>
</feature>
<feature type="binding site" evidence="1">
    <location>
        <position position="418"/>
    </location>
    <ligand>
        <name>Zn(2+)</name>
        <dbReference type="ChEBI" id="CHEBI:29105"/>
    </ligand>
</feature>
<feature type="binding site" evidence="1">
    <location>
        <position position="424"/>
    </location>
    <ligand>
        <name>Zn(2+)</name>
        <dbReference type="ChEBI" id="CHEBI:29105"/>
    </ligand>
</feature>